<feature type="chain" id="PRO_1000098418" description="Methionyl-tRNA formyltransferase">
    <location>
        <begin position="1"/>
        <end position="310"/>
    </location>
</feature>
<feature type="binding site" evidence="1">
    <location>
        <begin position="111"/>
        <end position="114"/>
    </location>
    <ligand>
        <name>(6S)-5,6,7,8-tetrahydrofolate</name>
        <dbReference type="ChEBI" id="CHEBI:57453"/>
    </ligand>
</feature>
<comment type="function">
    <text evidence="1">Attaches a formyl group to the free amino group of methionyl-tRNA(fMet). The formyl group appears to play a dual role in the initiator identity of N-formylmethionyl-tRNA by promoting its recognition by IF2 and preventing the misappropriation of this tRNA by the elongation apparatus.</text>
</comment>
<comment type="catalytic activity">
    <reaction evidence="1">
        <text>L-methionyl-tRNA(fMet) + (6R)-10-formyltetrahydrofolate = N-formyl-L-methionyl-tRNA(fMet) + (6S)-5,6,7,8-tetrahydrofolate + H(+)</text>
        <dbReference type="Rhea" id="RHEA:24380"/>
        <dbReference type="Rhea" id="RHEA-COMP:9952"/>
        <dbReference type="Rhea" id="RHEA-COMP:9953"/>
        <dbReference type="ChEBI" id="CHEBI:15378"/>
        <dbReference type="ChEBI" id="CHEBI:57453"/>
        <dbReference type="ChEBI" id="CHEBI:78530"/>
        <dbReference type="ChEBI" id="CHEBI:78844"/>
        <dbReference type="ChEBI" id="CHEBI:195366"/>
        <dbReference type="EC" id="2.1.2.9"/>
    </reaction>
</comment>
<comment type="similarity">
    <text evidence="1">Belongs to the Fmt family.</text>
</comment>
<gene>
    <name evidence="1" type="primary">fmt</name>
    <name type="ordered locus">M446_4239</name>
</gene>
<dbReference type="EC" id="2.1.2.9" evidence="1"/>
<dbReference type="EMBL" id="CP000943">
    <property type="protein sequence ID" value="ACA18588.1"/>
    <property type="molecule type" value="Genomic_DNA"/>
</dbReference>
<dbReference type="RefSeq" id="WP_012333979.1">
    <property type="nucleotide sequence ID" value="NC_010511.1"/>
</dbReference>
<dbReference type="SMR" id="B0UP41"/>
<dbReference type="STRING" id="426117.M446_4239"/>
<dbReference type="KEGG" id="met:M446_4239"/>
<dbReference type="eggNOG" id="COG0223">
    <property type="taxonomic scope" value="Bacteria"/>
</dbReference>
<dbReference type="HOGENOM" id="CLU_033347_1_2_5"/>
<dbReference type="GO" id="GO:0005829">
    <property type="term" value="C:cytosol"/>
    <property type="evidence" value="ECO:0007669"/>
    <property type="project" value="TreeGrafter"/>
</dbReference>
<dbReference type="GO" id="GO:0004479">
    <property type="term" value="F:methionyl-tRNA formyltransferase activity"/>
    <property type="evidence" value="ECO:0007669"/>
    <property type="project" value="UniProtKB-UniRule"/>
</dbReference>
<dbReference type="CDD" id="cd08646">
    <property type="entry name" value="FMT_core_Met-tRNA-FMT_N"/>
    <property type="match status" value="1"/>
</dbReference>
<dbReference type="CDD" id="cd08704">
    <property type="entry name" value="Met_tRNA_FMT_C"/>
    <property type="match status" value="1"/>
</dbReference>
<dbReference type="Gene3D" id="3.10.25.10">
    <property type="entry name" value="Formyl transferase, C-terminal domain"/>
    <property type="match status" value="1"/>
</dbReference>
<dbReference type="Gene3D" id="3.40.50.170">
    <property type="entry name" value="Formyl transferase, N-terminal domain"/>
    <property type="match status" value="1"/>
</dbReference>
<dbReference type="HAMAP" id="MF_00182">
    <property type="entry name" value="Formyl_trans"/>
    <property type="match status" value="1"/>
</dbReference>
<dbReference type="InterPro" id="IPR005794">
    <property type="entry name" value="Fmt"/>
</dbReference>
<dbReference type="InterPro" id="IPR005793">
    <property type="entry name" value="Formyl_trans_C"/>
</dbReference>
<dbReference type="InterPro" id="IPR037022">
    <property type="entry name" value="Formyl_trans_C_sf"/>
</dbReference>
<dbReference type="InterPro" id="IPR002376">
    <property type="entry name" value="Formyl_transf_N"/>
</dbReference>
<dbReference type="InterPro" id="IPR036477">
    <property type="entry name" value="Formyl_transf_N_sf"/>
</dbReference>
<dbReference type="InterPro" id="IPR011034">
    <property type="entry name" value="Formyl_transferase-like_C_sf"/>
</dbReference>
<dbReference type="InterPro" id="IPR044135">
    <property type="entry name" value="Met-tRNA-FMT_C"/>
</dbReference>
<dbReference type="InterPro" id="IPR041711">
    <property type="entry name" value="Met-tRNA-FMT_N"/>
</dbReference>
<dbReference type="NCBIfam" id="TIGR00460">
    <property type="entry name" value="fmt"/>
    <property type="match status" value="1"/>
</dbReference>
<dbReference type="PANTHER" id="PTHR11138">
    <property type="entry name" value="METHIONYL-TRNA FORMYLTRANSFERASE"/>
    <property type="match status" value="1"/>
</dbReference>
<dbReference type="PANTHER" id="PTHR11138:SF5">
    <property type="entry name" value="METHIONYL-TRNA FORMYLTRANSFERASE, MITOCHONDRIAL"/>
    <property type="match status" value="1"/>
</dbReference>
<dbReference type="Pfam" id="PF02911">
    <property type="entry name" value="Formyl_trans_C"/>
    <property type="match status" value="1"/>
</dbReference>
<dbReference type="Pfam" id="PF00551">
    <property type="entry name" value="Formyl_trans_N"/>
    <property type="match status" value="1"/>
</dbReference>
<dbReference type="SUPFAM" id="SSF50486">
    <property type="entry name" value="FMT C-terminal domain-like"/>
    <property type="match status" value="1"/>
</dbReference>
<dbReference type="SUPFAM" id="SSF53328">
    <property type="entry name" value="Formyltransferase"/>
    <property type="match status" value="1"/>
</dbReference>
<sequence>MSLKVVFMGTPDFAVPTLAEIVGGGHEVVAVYTRAPAPAGRGMALRPSPVQALAERFGLPVLTPSTLRGPEAAETFRAHGADVAVVVAYGMILPPAILDAPPLGCLNLHASILPRWRGAAPIQRAVMAGDAETGVAVMRMEPGLDTGPVAMLERVAISPEMTAGDLHDRLMPLGADLMHRALGALERGGLTFTPQPAEGVVYAHKITNEEARLDWTAPAARLHDRVRGLSPFPGAFFLADLGRGPERVKVLRARSAEGSGAPGTLLDEAGTVACGEGALRLLRVQPAGKAAMEAADFLRGRRLEPGTRLA</sequence>
<protein>
    <recommendedName>
        <fullName evidence="1">Methionyl-tRNA formyltransferase</fullName>
        <ecNumber evidence="1">2.1.2.9</ecNumber>
    </recommendedName>
</protein>
<organism>
    <name type="scientific">Methylobacterium sp. (strain 4-46)</name>
    <dbReference type="NCBI Taxonomy" id="426117"/>
    <lineage>
        <taxon>Bacteria</taxon>
        <taxon>Pseudomonadati</taxon>
        <taxon>Pseudomonadota</taxon>
        <taxon>Alphaproteobacteria</taxon>
        <taxon>Hyphomicrobiales</taxon>
        <taxon>Methylobacteriaceae</taxon>
        <taxon>Methylobacterium</taxon>
    </lineage>
</organism>
<accession>B0UP41</accession>
<proteinExistence type="inferred from homology"/>
<keyword id="KW-0648">Protein biosynthesis</keyword>
<keyword id="KW-0808">Transferase</keyword>
<reference key="1">
    <citation type="submission" date="2008-02" db="EMBL/GenBank/DDBJ databases">
        <title>Complete sequence of chromosome of Methylobacterium sp. 4-46.</title>
        <authorList>
            <consortium name="US DOE Joint Genome Institute"/>
            <person name="Copeland A."/>
            <person name="Lucas S."/>
            <person name="Lapidus A."/>
            <person name="Glavina del Rio T."/>
            <person name="Dalin E."/>
            <person name="Tice H."/>
            <person name="Bruce D."/>
            <person name="Goodwin L."/>
            <person name="Pitluck S."/>
            <person name="Chertkov O."/>
            <person name="Brettin T."/>
            <person name="Detter J.C."/>
            <person name="Han C."/>
            <person name="Kuske C.R."/>
            <person name="Schmutz J."/>
            <person name="Larimer F."/>
            <person name="Land M."/>
            <person name="Hauser L."/>
            <person name="Kyrpides N."/>
            <person name="Ivanova N."/>
            <person name="Marx C.J."/>
            <person name="Richardson P."/>
        </authorList>
    </citation>
    <scope>NUCLEOTIDE SEQUENCE [LARGE SCALE GENOMIC DNA]</scope>
    <source>
        <strain>4-46</strain>
    </source>
</reference>
<evidence type="ECO:0000255" key="1">
    <source>
        <dbReference type="HAMAP-Rule" id="MF_00182"/>
    </source>
</evidence>
<name>FMT_METS4</name>